<reference key="1">
    <citation type="journal article" date="2008" name="Genomics">
        <title>Characterization of ST-4821 complex, a unique Neisseria meningitidis clone.</title>
        <authorList>
            <person name="Peng J."/>
            <person name="Yang L."/>
            <person name="Yang F."/>
            <person name="Yang J."/>
            <person name="Yan Y."/>
            <person name="Nie H."/>
            <person name="Zhang X."/>
            <person name="Xiong Z."/>
            <person name="Jiang Y."/>
            <person name="Cheng F."/>
            <person name="Xu X."/>
            <person name="Chen S."/>
            <person name="Sun L."/>
            <person name="Li W."/>
            <person name="Shen Y."/>
            <person name="Shao Z."/>
            <person name="Liang X."/>
            <person name="Xu J."/>
            <person name="Jin Q."/>
        </authorList>
    </citation>
    <scope>NUCLEOTIDE SEQUENCE [LARGE SCALE GENOMIC DNA]</scope>
    <source>
        <strain>053442</strain>
    </source>
</reference>
<feature type="chain" id="PRO_1000083192" description="UPF0276 protein NMCC_2101">
    <location>
        <begin position="1"/>
        <end position="280"/>
    </location>
</feature>
<sequence length="280" mass="31632">MIQHAGLGYRRDLAEDFLSLSENSPICFIEAAPENWLKMGGWARKQFDRVAERLPLALHGLSMSLGGQAPLDTDLIDGIKEMMRRYDCTFFSDHLSYCHDGGHLYDLLPLPFTEEMVHHTARRIREVQDRLGCRIAVENTSYYLHSPLAEMNEVEFLNAVAREADCGIHLDVNNIYVNAVNHGLLSPEAFLKNVDADRVCYIHIAGHDVETPELLIDTHGAAVLPTVWDLLELAYAKLPTIPPTLLERDFNFPPFAELEAEVAKIADYQTRAGKEYRRAA</sequence>
<proteinExistence type="inferred from homology"/>
<dbReference type="EMBL" id="CP000381">
    <property type="protein sequence ID" value="ABX74218.1"/>
    <property type="molecule type" value="Genomic_DNA"/>
</dbReference>
<dbReference type="RefSeq" id="WP_002224718.1">
    <property type="nucleotide sequence ID" value="NC_010120.1"/>
</dbReference>
<dbReference type="SMR" id="A9M4C4"/>
<dbReference type="KEGG" id="nmn:NMCC_2101"/>
<dbReference type="HOGENOM" id="CLU_064263_0_0_4"/>
<dbReference type="Proteomes" id="UP000001177">
    <property type="component" value="Chromosome"/>
</dbReference>
<dbReference type="Gene3D" id="3.20.20.150">
    <property type="entry name" value="Divalent-metal-dependent TIM barrel enzymes"/>
    <property type="match status" value="1"/>
</dbReference>
<dbReference type="HAMAP" id="MF_00697">
    <property type="entry name" value="UPF0276"/>
    <property type="match status" value="1"/>
</dbReference>
<dbReference type="InterPro" id="IPR007801">
    <property type="entry name" value="MbnB/TglH/ChrH"/>
</dbReference>
<dbReference type="InterPro" id="IPR036237">
    <property type="entry name" value="Xyl_isomerase-like_sf"/>
</dbReference>
<dbReference type="NCBIfam" id="NF003818">
    <property type="entry name" value="PRK05409.1"/>
    <property type="match status" value="1"/>
</dbReference>
<dbReference type="PANTHER" id="PTHR42194">
    <property type="entry name" value="UPF0276 PROTEIN HI_1600"/>
    <property type="match status" value="1"/>
</dbReference>
<dbReference type="PANTHER" id="PTHR42194:SF1">
    <property type="entry name" value="UPF0276 PROTEIN HI_1600"/>
    <property type="match status" value="1"/>
</dbReference>
<dbReference type="Pfam" id="PF05114">
    <property type="entry name" value="MbnB_TglH_ChrH"/>
    <property type="match status" value="1"/>
</dbReference>
<dbReference type="SUPFAM" id="SSF51658">
    <property type="entry name" value="Xylose isomerase-like"/>
    <property type="match status" value="1"/>
</dbReference>
<accession>A9M4C4</accession>
<gene>
    <name type="ordered locus">NMCC_2101</name>
</gene>
<comment type="similarity">
    <text evidence="1">Belongs to the UPF0276 family.</text>
</comment>
<evidence type="ECO:0000255" key="1">
    <source>
        <dbReference type="HAMAP-Rule" id="MF_00697"/>
    </source>
</evidence>
<protein>
    <recommendedName>
        <fullName evidence="1">UPF0276 protein NMCC_2101</fullName>
    </recommendedName>
</protein>
<organism>
    <name type="scientific">Neisseria meningitidis serogroup C (strain 053442)</name>
    <dbReference type="NCBI Taxonomy" id="374833"/>
    <lineage>
        <taxon>Bacteria</taxon>
        <taxon>Pseudomonadati</taxon>
        <taxon>Pseudomonadota</taxon>
        <taxon>Betaproteobacteria</taxon>
        <taxon>Neisseriales</taxon>
        <taxon>Neisseriaceae</taxon>
        <taxon>Neisseria</taxon>
    </lineage>
</organism>
<name>Y2101_NEIM0</name>